<protein>
    <recommendedName>
        <fullName evidence="1">Ribosome-binding factor A</fullName>
    </recommendedName>
</protein>
<name>RBFA_SHEPC</name>
<comment type="function">
    <text evidence="1">One of several proteins that assist in the late maturation steps of the functional core of the 30S ribosomal subunit. Associates with free 30S ribosomal subunits (but not with 30S subunits that are part of 70S ribosomes or polysomes). Required for efficient processing of 16S rRNA. May interact with the 5'-terminal helix region of 16S rRNA.</text>
</comment>
<comment type="subunit">
    <text evidence="1">Monomer. Binds 30S ribosomal subunits, but not 50S ribosomal subunits or 70S ribosomes.</text>
</comment>
<comment type="subcellular location">
    <subcellularLocation>
        <location evidence="1">Cytoplasm</location>
    </subcellularLocation>
</comment>
<comment type="similarity">
    <text evidence="1">Belongs to the RbfA family.</text>
</comment>
<reference key="1">
    <citation type="submission" date="2007-04" db="EMBL/GenBank/DDBJ databases">
        <title>Complete sequence of Shewanella putrefaciens CN-32.</title>
        <authorList>
            <consortium name="US DOE Joint Genome Institute"/>
            <person name="Copeland A."/>
            <person name="Lucas S."/>
            <person name="Lapidus A."/>
            <person name="Barry K."/>
            <person name="Detter J.C."/>
            <person name="Glavina del Rio T."/>
            <person name="Hammon N."/>
            <person name="Israni S."/>
            <person name="Dalin E."/>
            <person name="Tice H."/>
            <person name="Pitluck S."/>
            <person name="Chain P."/>
            <person name="Malfatti S."/>
            <person name="Shin M."/>
            <person name="Vergez L."/>
            <person name="Schmutz J."/>
            <person name="Larimer F."/>
            <person name="Land M."/>
            <person name="Hauser L."/>
            <person name="Kyrpides N."/>
            <person name="Mikhailova N."/>
            <person name="Romine M.F."/>
            <person name="Fredrickson J."/>
            <person name="Tiedje J."/>
            <person name="Richardson P."/>
        </authorList>
    </citation>
    <scope>NUCLEOTIDE SEQUENCE [LARGE SCALE GENOMIC DNA]</scope>
    <source>
        <strain>CN-32 / ATCC BAA-453</strain>
    </source>
</reference>
<dbReference type="EMBL" id="CP000681">
    <property type="protein sequence ID" value="ABP76552.1"/>
    <property type="molecule type" value="Genomic_DNA"/>
</dbReference>
<dbReference type="SMR" id="A4Y9B9"/>
<dbReference type="STRING" id="319224.Sputcn32_2833"/>
<dbReference type="KEGG" id="spc:Sputcn32_2833"/>
<dbReference type="eggNOG" id="COG0858">
    <property type="taxonomic scope" value="Bacteria"/>
</dbReference>
<dbReference type="HOGENOM" id="CLU_089475_5_0_6"/>
<dbReference type="GO" id="GO:0005829">
    <property type="term" value="C:cytosol"/>
    <property type="evidence" value="ECO:0007669"/>
    <property type="project" value="TreeGrafter"/>
</dbReference>
<dbReference type="GO" id="GO:0043024">
    <property type="term" value="F:ribosomal small subunit binding"/>
    <property type="evidence" value="ECO:0007669"/>
    <property type="project" value="TreeGrafter"/>
</dbReference>
<dbReference type="GO" id="GO:0030490">
    <property type="term" value="P:maturation of SSU-rRNA"/>
    <property type="evidence" value="ECO:0007669"/>
    <property type="project" value="UniProtKB-UniRule"/>
</dbReference>
<dbReference type="FunFam" id="3.30.300.20:FF:000007">
    <property type="entry name" value="Ribosome-binding factor A"/>
    <property type="match status" value="1"/>
</dbReference>
<dbReference type="Gene3D" id="3.30.300.20">
    <property type="match status" value="1"/>
</dbReference>
<dbReference type="HAMAP" id="MF_00003">
    <property type="entry name" value="RbfA"/>
    <property type="match status" value="1"/>
</dbReference>
<dbReference type="InterPro" id="IPR015946">
    <property type="entry name" value="KH_dom-like_a/b"/>
</dbReference>
<dbReference type="InterPro" id="IPR000238">
    <property type="entry name" value="RbfA"/>
</dbReference>
<dbReference type="InterPro" id="IPR023799">
    <property type="entry name" value="RbfA_dom_sf"/>
</dbReference>
<dbReference type="InterPro" id="IPR020053">
    <property type="entry name" value="Ribosome-bd_factorA_CS"/>
</dbReference>
<dbReference type="NCBIfam" id="TIGR00082">
    <property type="entry name" value="rbfA"/>
    <property type="match status" value="1"/>
</dbReference>
<dbReference type="PANTHER" id="PTHR33515">
    <property type="entry name" value="RIBOSOME-BINDING FACTOR A, CHLOROPLASTIC-RELATED"/>
    <property type="match status" value="1"/>
</dbReference>
<dbReference type="PANTHER" id="PTHR33515:SF1">
    <property type="entry name" value="RIBOSOME-BINDING FACTOR A, CHLOROPLASTIC-RELATED"/>
    <property type="match status" value="1"/>
</dbReference>
<dbReference type="Pfam" id="PF02033">
    <property type="entry name" value="RBFA"/>
    <property type="match status" value="1"/>
</dbReference>
<dbReference type="SUPFAM" id="SSF89919">
    <property type="entry name" value="Ribosome-binding factor A, RbfA"/>
    <property type="match status" value="1"/>
</dbReference>
<dbReference type="PROSITE" id="PS01319">
    <property type="entry name" value="RBFA"/>
    <property type="match status" value="1"/>
</dbReference>
<organism>
    <name type="scientific">Shewanella putrefaciens (strain CN-32 / ATCC BAA-453)</name>
    <dbReference type="NCBI Taxonomy" id="319224"/>
    <lineage>
        <taxon>Bacteria</taxon>
        <taxon>Pseudomonadati</taxon>
        <taxon>Pseudomonadota</taxon>
        <taxon>Gammaproteobacteria</taxon>
        <taxon>Alteromonadales</taxon>
        <taxon>Shewanellaceae</taxon>
        <taxon>Shewanella</taxon>
    </lineage>
</organism>
<evidence type="ECO:0000255" key="1">
    <source>
        <dbReference type="HAMAP-Rule" id="MF_00003"/>
    </source>
</evidence>
<evidence type="ECO:0000256" key="2">
    <source>
        <dbReference type="SAM" id="MobiDB-lite"/>
    </source>
</evidence>
<keyword id="KW-0963">Cytoplasm</keyword>
<keyword id="KW-0690">Ribosome biogenesis</keyword>
<accession>A4Y9B9</accession>
<sequence length="149" mass="16938">MAKEFSRTRRIAQQLQQELAQVLQRDMKDPRIGFVTVNDVDVSRDLSYAKVFVTFFEEDKAVVQEKLNALISAAPYIRTLVAGRMKLRVMPELRFVYDSSLVEGMRMSNLVSQVINQDKAKQQQFGSADEVLNEDEGATDDTDDTKGKD</sequence>
<proteinExistence type="inferred from homology"/>
<feature type="chain" id="PRO_1000000204" description="Ribosome-binding factor A">
    <location>
        <begin position="1"/>
        <end position="149"/>
    </location>
</feature>
<feature type="region of interest" description="Disordered" evidence="2">
    <location>
        <begin position="125"/>
        <end position="149"/>
    </location>
</feature>
<feature type="compositionally biased region" description="Acidic residues" evidence="2">
    <location>
        <begin position="131"/>
        <end position="143"/>
    </location>
</feature>
<gene>
    <name evidence="1" type="primary">rbfA</name>
    <name type="ordered locus">Sputcn32_2833</name>
</gene>